<keyword id="KW-0687">Ribonucleoprotein</keyword>
<keyword id="KW-0689">Ribosomal protein</keyword>
<comment type="similarity">
    <text evidence="1">Belongs to the bacterial ribosomal protein bL28 family.</text>
</comment>
<proteinExistence type="inferred from homology"/>
<organism>
    <name type="scientific">Vibrio cholerae serotype O1 (strain ATCC 39541 / Classical Ogawa 395 / O395)</name>
    <dbReference type="NCBI Taxonomy" id="345073"/>
    <lineage>
        <taxon>Bacteria</taxon>
        <taxon>Pseudomonadati</taxon>
        <taxon>Pseudomonadota</taxon>
        <taxon>Gammaproteobacteria</taxon>
        <taxon>Vibrionales</taxon>
        <taxon>Vibrionaceae</taxon>
        <taxon>Vibrio</taxon>
    </lineage>
</organism>
<evidence type="ECO:0000255" key="1">
    <source>
        <dbReference type="HAMAP-Rule" id="MF_00373"/>
    </source>
</evidence>
<evidence type="ECO:0000256" key="2">
    <source>
        <dbReference type="SAM" id="MobiDB-lite"/>
    </source>
</evidence>
<evidence type="ECO:0000305" key="3"/>
<sequence length="78" mass="8986">MSRVCQVTGKRPAVGNNRSHAKNATKRRFLPNLQTHRFWVESEKRFVKLRLTAKGMRIIDKKGIDAVLVEIRARGENV</sequence>
<name>RL28_VIBC3</name>
<reference key="1">
    <citation type="submission" date="2007-03" db="EMBL/GenBank/DDBJ databases">
        <authorList>
            <person name="Heidelberg J."/>
        </authorList>
    </citation>
    <scope>NUCLEOTIDE SEQUENCE [LARGE SCALE GENOMIC DNA]</scope>
    <source>
        <strain>ATCC 39541 / Classical Ogawa 395 / O395</strain>
    </source>
</reference>
<reference key="2">
    <citation type="journal article" date="2008" name="PLoS ONE">
        <title>A recalibrated molecular clock and independent origins for the cholera pandemic clones.</title>
        <authorList>
            <person name="Feng L."/>
            <person name="Reeves P.R."/>
            <person name="Lan R."/>
            <person name="Ren Y."/>
            <person name="Gao C."/>
            <person name="Zhou Z."/>
            <person name="Ren Y."/>
            <person name="Cheng J."/>
            <person name="Wang W."/>
            <person name="Wang J."/>
            <person name="Qian W."/>
            <person name="Li D."/>
            <person name="Wang L."/>
        </authorList>
    </citation>
    <scope>NUCLEOTIDE SEQUENCE [LARGE SCALE GENOMIC DNA]</scope>
    <source>
        <strain>ATCC 39541 / Classical Ogawa 395 / O395</strain>
    </source>
</reference>
<protein>
    <recommendedName>
        <fullName evidence="1">Large ribosomal subunit protein bL28</fullName>
    </recommendedName>
    <alternativeName>
        <fullName evidence="3">50S ribosomal protein L28</fullName>
    </alternativeName>
</protein>
<dbReference type="EMBL" id="CP000627">
    <property type="protein sequence ID" value="ABQ19675.1"/>
    <property type="molecule type" value="Genomic_DNA"/>
</dbReference>
<dbReference type="EMBL" id="CP001235">
    <property type="protein sequence ID" value="ACP08275.1"/>
    <property type="molecule type" value="Genomic_DNA"/>
</dbReference>
<dbReference type="RefSeq" id="WP_000091952.1">
    <property type="nucleotide sequence ID" value="NZ_JAACZH010000028.1"/>
</dbReference>
<dbReference type="SMR" id="A5F404"/>
<dbReference type="GeneID" id="94014999"/>
<dbReference type="KEGG" id="vco:VC0395_A2599"/>
<dbReference type="KEGG" id="vcr:VC395_0250"/>
<dbReference type="PATRIC" id="fig|345073.21.peg.239"/>
<dbReference type="eggNOG" id="COG0227">
    <property type="taxonomic scope" value="Bacteria"/>
</dbReference>
<dbReference type="HOGENOM" id="CLU_064548_3_1_6"/>
<dbReference type="OrthoDB" id="9805609at2"/>
<dbReference type="Proteomes" id="UP000000249">
    <property type="component" value="Chromosome 2"/>
</dbReference>
<dbReference type="GO" id="GO:0022625">
    <property type="term" value="C:cytosolic large ribosomal subunit"/>
    <property type="evidence" value="ECO:0007669"/>
    <property type="project" value="TreeGrafter"/>
</dbReference>
<dbReference type="GO" id="GO:0003735">
    <property type="term" value="F:structural constituent of ribosome"/>
    <property type="evidence" value="ECO:0007669"/>
    <property type="project" value="InterPro"/>
</dbReference>
<dbReference type="GO" id="GO:0006412">
    <property type="term" value="P:translation"/>
    <property type="evidence" value="ECO:0007669"/>
    <property type="project" value="UniProtKB-UniRule"/>
</dbReference>
<dbReference type="FunFam" id="2.30.170.40:FF:000001">
    <property type="entry name" value="50S ribosomal protein L28"/>
    <property type="match status" value="1"/>
</dbReference>
<dbReference type="Gene3D" id="2.30.170.40">
    <property type="entry name" value="Ribosomal protein L28/L24"/>
    <property type="match status" value="1"/>
</dbReference>
<dbReference type="HAMAP" id="MF_00373">
    <property type="entry name" value="Ribosomal_bL28"/>
    <property type="match status" value="1"/>
</dbReference>
<dbReference type="InterPro" id="IPR026569">
    <property type="entry name" value="Ribosomal_bL28"/>
</dbReference>
<dbReference type="InterPro" id="IPR034704">
    <property type="entry name" value="Ribosomal_bL28/bL31-like_sf"/>
</dbReference>
<dbReference type="InterPro" id="IPR001383">
    <property type="entry name" value="Ribosomal_bL28_bact-type"/>
</dbReference>
<dbReference type="InterPro" id="IPR037147">
    <property type="entry name" value="Ribosomal_bL28_sf"/>
</dbReference>
<dbReference type="NCBIfam" id="TIGR00009">
    <property type="entry name" value="L28"/>
    <property type="match status" value="1"/>
</dbReference>
<dbReference type="PANTHER" id="PTHR13528">
    <property type="entry name" value="39S RIBOSOMAL PROTEIN L28, MITOCHONDRIAL"/>
    <property type="match status" value="1"/>
</dbReference>
<dbReference type="PANTHER" id="PTHR13528:SF2">
    <property type="entry name" value="LARGE RIBOSOMAL SUBUNIT PROTEIN BL28M"/>
    <property type="match status" value="1"/>
</dbReference>
<dbReference type="Pfam" id="PF00830">
    <property type="entry name" value="Ribosomal_L28"/>
    <property type="match status" value="1"/>
</dbReference>
<dbReference type="SUPFAM" id="SSF143800">
    <property type="entry name" value="L28p-like"/>
    <property type="match status" value="1"/>
</dbReference>
<feature type="chain" id="PRO_1000072139" description="Large ribosomal subunit protein bL28">
    <location>
        <begin position="1"/>
        <end position="78"/>
    </location>
</feature>
<feature type="region of interest" description="Disordered" evidence="2">
    <location>
        <begin position="1"/>
        <end position="25"/>
    </location>
</feature>
<accession>A5F404</accession>
<accession>C3M396</accession>
<gene>
    <name evidence="1" type="primary">rpmB</name>
    <name type="ordered locus">VC0395_A2599</name>
    <name type="ordered locus">VC395_0250</name>
</gene>